<accession>Q03213</accession>
<accession>D6VZZ4</accession>
<dbReference type="EMBL" id="Z49808">
    <property type="protein sequence ID" value="CAA89905.1"/>
    <property type="molecule type" value="Genomic_DNA"/>
</dbReference>
<dbReference type="EMBL" id="BK006946">
    <property type="protein sequence ID" value="DAA10068.1"/>
    <property type="molecule type" value="Genomic_DNA"/>
</dbReference>
<dbReference type="PIR" id="S55119">
    <property type="entry name" value="S55119"/>
</dbReference>
<dbReference type="RefSeq" id="NP_013895.1">
    <property type="nucleotide sequence ID" value="NM_001182677.1"/>
</dbReference>
<dbReference type="SMR" id="Q03213"/>
<dbReference type="BioGRID" id="35350">
    <property type="interactions" value="91"/>
</dbReference>
<dbReference type="DIP" id="DIP-2367N"/>
<dbReference type="FunCoup" id="Q03213">
    <property type="interactions" value="401"/>
</dbReference>
<dbReference type="IntAct" id="Q03213">
    <property type="interactions" value="11"/>
</dbReference>
<dbReference type="MINT" id="Q03213"/>
<dbReference type="STRING" id="4932.YMR172W"/>
<dbReference type="GlyGen" id="Q03213">
    <property type="glycosylation" value="2 sites, 1 O-linked glycan (1 site)"/>
</dbReference>
<dbReference type="iPTMnet" id="Q03213"/>
<dbReference type="PaxDb" id="4932-YMR172W"/>
<dbReference type="PeptideAtlas" id="Q03213"/>
<dbReference type="TopDownProteomics" id="Q03213"/>
<dbReference type="EnsemblFungi" id="YMR172W_mRNA">
    <property type="protein sequence ID" value="YMR172W"/>
    <property type="gene ID" value="YMR172W"/>
</dbReference>
<dbReference type="GeneID" id="855208"/>
<dbReference type="KEGG" id="sce:YMR172W"/>
<dbReference type="AGR" id="SGD:S000004783"/>
<dbReference type="SGD" id="S000004783">
    <property type="gene designation" value="HOT1"/>
</dbReference>
<dbReference type="VEuPathDB" id="FungiDB:YMR172W"/>
<dbReference type="eggNOG" id="ENOG502QQ7G">
    <property type="taxonomic scope" value="Eukaryota"/>
</dbReference>
<dbReference type="HOGENOM" id="CLU_023418_0_0_1"/>
<dbReference type="InParanoid" id="Q03213"/>
<dbReference type="OMA" id="KTIWEEY"/>
<dbReference type="OrthoDB" id="428577at2759"/>
<dbReference type="BioCyc" id="YEAST:G3O-32860-MONOMER"/>
<dbReference type="BioGRID-ORCS" id="855208">
    <property type="hits" value="3 hits in 10 CRISPR screens"/>
</dbReference>
<dbReference type="PRO" id="PR:Q03213"/>
<dbReference type="Proteomes" id="UP000002311">
    <property type="component" value="Chromosome XIII"/>
</dbReference>
<dbReference type="RNAct" id="Q03213">
    <property type="molecule type" value="protein"/>
</dbReference>
<dbReference type="GO" id="GO:0005634">
    <property type="term" value="C:nucleus"/>
    <property type="evidence" value="ECO:0000314"/>
    <property type="project" value="SGD"/>
</dbReference>
<dbReference type="GO" id="GO:0000981">
    <property type="term" value="F:DNA-binding transcription factor activity, RNA polymerase II-specific"/>
    <property type="evidence" value="ECO:0000314"/>
    <property type="project" value="SGD"/>
</dbReference>
<dbReference type="GO" id="GO:0000978">
    <property type="term" value="F:RNA polymerase II cis-regulatory region sequence-specific DNA binding"/>
    <property type="evidence" value="ECO:0000318"/>
    <property type="project" value="GO_Central"/>
</dbReference>
<dbReference type="GO" id="GO:0016251">
    <property type="term" value="F:RNA polymerase II general transcription initiation factor activity"/>
    <property type="evidence" value="ECO:0000314"/>
    <property type="project" value="SGD"/>
</dbReference>
<dbReference type="GO" id="GO:0071470">
    <property type="term" value="P:cellular response to osmotic stress"/>
    <property type="evidence" value="ECO:0000315"/>
    <property type="project" value="SGD"/>
</dbReference>
<dbReference type="GO" id="GO:0060963">
    <property type="term" value="P:positive regulation of ribosomal protein gene transcription by RNA polymerase II"/>
    <property type="evidence" value="ECO:0000318"/>
    <property type="project" value="GO_Central"/>
</dbReference>
<dbReference type="GO" id="GO:0045944">
    <property type="term" value="P:positive regulation of transcription by RNA polymerase II"/>
    <property type="evidence" value="ECO:0000315"/>
    <property type="project" value="SGD"/>
</dbReference>
<dbReference type="GO" id="GO:0051123">
    <property type="term" value="P:RNA polymerase II preinitiation complex assembly"/>
    <property type="evidence" value="ECO:0000314"/>
    <property type="project" value="SGD"/>
</dbReference>
<dbReference type="InterPro" id="IPR052146">
    <property type="entry name" value="HOT1"/>
</dbReference>
<dbReference type="InterPro" id="IPR022210">
    <property type="entry name" value="TF_GCR1-like"/>
</dbReference>
<dbReference type="PANTHER" id="PTHR37784:SF2">
    <property type="entry name" value="HIGH-OSMOLARITY-INDUCED TRANSCRIPTION PROTEIN 1"/>
    <property type="match status" value="1"/>
</dbReference>
<dbReference type="PANTHER" id="PTHR37784">
    <property type="entry name" value="PROTEIN MSN1"/>
    <property type="match status" value="1"/>
</dbReference>
<dbReference type="Pfam" id="PF12550">
    <property type="entry name" value="GCR1_C"/>
    <property type="match status" value="1"/>
</dbReference>
<protein>
    <recommendedName>
        <fullName>High-osmolarity-induced transcription protein 1</fullName>
    </recommendedName>
</protein>
<proteinExistence type="evidence at protein level"/>
<sequence length="719" mass="79416">MSGMGIAILCIVRTKIYRITISFDYSTLMSPFFLFLMMPTTLKDGYRMNSQVNEDAIGINLDLSLPTHISPTTGSESASGSNASTLRNDGNALDGGLLRTSAAISAPTGTSQPTETIGEKLSNEERVNSNVSASNSTTAGTGRMLSQSLTNDSPSNEISTDQLKIFQRMDEMSARMIEMEESFNKLSNKIAEQNTMVLNLKQDNYKVMNKLNILLKLVAQPSARPSTNNAQNKLAIELLNSISAVSSAYLQKMQNNGSGRQHTADLCTGDSNTHSGINQHRTTNGTIDVNTNTAQLNNQFSNALNTILPDQQHNRNNVSQNINQSLPNRQLGPVINTQANQNQSQVLIHNTNTHQQVNRSPISFPNASTDKPFKLNPNGIKRRRRNTQSNNNASTNDHASAAQKPISALSPLTNSHNSTTSMNYTNSSIHSGVTSASNSFHDLNSLNNFGTTTALSLPSLALDNASFPPNQNVIPPIINNTQQPLSFSQLINQDSTTSELLPSGKSGVNTNIVNRNRASTLPSYPKPMTVKSNVDDDGYQEDDDDDGDDEGDGRDNEEDSTAEEDEVDDEIETDMKNASINKRRRSLHHKKSNSLNGRRKLHGESATKPNINSDLHYRILKAPTDVKTIWEEYDTGIRGKPSIKHLEAKYGNKWRLNKNKKTFSRRKRLYKFILNGMERGKTAQEMIETLENKRLYKDDEDGEVKKRTIGWLQESLAGI</sequence>
<gene>
    <name type="primary">HOT1</name>
    <name type="ordered locus">YMR172W</name>
    <name type="ORF">YM8010.02</name>
</gene>
<keyword id="KW-0010">Activator</keyword>
<keyword id="KW-0539">Nucleus</keyword>
<keyword id="KW-0597">Phosphoprotein</keyword>
<keyword id="KW-1185">Reference proteome</keyword>
<keyword id="KW-0804">Transcription</keyword>
<keyword id="KW-0805">Transcription regulation</keyword>
<evidence type="ECO:0000256" key="1">
    <source>
        <dbReference type="SAM" id="MobiDB-lite"/>
    </source>
</evidence>
<evidence type="ECO:0000269" key="2">
    <source>
    </source>
</evidence>
<evidence type="ECO:0000269" key="3">
    <source>
    </source>
</evidence>
<evidence type="ECO:0000269" key="4">
    <source>
    </source>
</evidence>
<evidence type="ECO:0000269" key="5">
    <source>
    </source>
</evidence>
<evidence type="ECO:0000269" key="6">
    <source>
    </source>
</evidence>
<evidence type="ECO:0000269" key="7">
    <source>
    </source>
</evidence>
<evidence type="ECO:0000305" key="8"/>
<evidence type="ECO:0007744" key="9">
    <source>
    </source>
</evidence>
<evidence type="ECO:0007744" key="10">
    <source>
    </source>
</evidence>
<feature type="chain" id="PRO_0000203317" description="High-osmolarity-induced transcription protein 1">
    <location>
        <begin position="1"/>
        <end position="719"/>
    </location>
</feature>
<feature type="region of interest" description="Disordered" evidence="1">
    <location>
        <begin position="68"/>
        <end position="90"/>
    </location>
</feature>
<feature type="region of interest" description="Disordered" evidence="1">
    <location>
        <begin position="102"/>
        <end position="159"/>
    </location>
</feature>
<feature type="region of interest" description="Disordered" evidence="1">
    <location>
        <begin position="353"/>
        <end position="402"/>
    </location>
</feature>
<feature type="region of interest" description="Disordered" evidence="1">
    <location>
        <begin position="496"/>
        <end position="610"/>
    </location>
</feature>
<feature type="compositionally biased region" description="Polar residues" evidence="1">
    <location>
        <begin position="68"/>
        <end position="88"/>
    </location>
</feature>
<feature type="compositionally biased region" description="Basic and acidic residues" evidence="1">
    <location>
        <begin position="117"/>
        <end position="127"/>
    </location>
</feature>
<feature type="compositionally biased region" description="Low complexity" evidence="1">
    <location>
        <begin position="128"/>
        <end position="143"/>
    </location>
</feature>
<feature type="compositionally biased region" description="Polar residues" evidence="1">
    <location>
        <begin position="144"/>
        <end position="159"/>
    </location>
</feature>
<feature type="compositionally biased region" description="Polar residues" evidence="1">
    <location>
        <begin position="353"/>
        <end position="369"/>
    </location>
</feature>
<feature type="compositionally biased region" description="Polar residues" evidence="1">
    <location>
        <begin position="387"/>
        <end position="398"/>
    </location>
</feature>
<feature type="compositionally biased region" description="Polar residues" evidence="1">
    <location>
        <begin position="496"/>
        <end position="522"/>
    </location>
</feature>
<feature type="compositionally biased region" description="Acidic residues" evidence="1">
    <location>
        <begin position="535"/>
        <end position="572"/>
    </location>
</feature>
<feature type="compositionally biased region" description="Basic residues" evidence="1">
    <location>
        <begin position="581"/>
        <end position="601"/>
    </location>
</feature>
<feature type="modified residue" description="Phosphoserine" evidence="9">
    <location>
        <position position="146"/>
    </location>
</feature>
<feature type="modified residue" description="Phosphoserine" evidence="10">
    <location>
        <position position="153"/>
    </location>
</feature>
<feature type="mutagenesis site" description="Impairs HOT1 phosphorylation; when associated with A-70; A-153; A-360 and A-410." evidence="5">
    <original>S</original>
    <variation>A</variation>
    <location>
        <position position="30"/>
    </location>
</feature>
<feature type="mutagenesis site" description="Impairs HOT1 phosphorylation; when associated with A-30; A-153; A-360 and A-410." evidence="5">
    <original>S</original>
    <variation>A</variation>
    <location>
        <position position="70"/>
    </location>
</feature>
<feature type="mutagenesis site" description="Impairs HOT1 phosphorylation; when associated with A-30; A-70; A-360 and A-410." evidence="5">
    <original>S</original>
    <variation>A</variation>
    <location>
        <position position="153"/>
    </location>
</feature>
<feature type="mutagenesis site" description="Impairs HOT1 phosphorylation; when associated with A-30; A-70; A-153 and A-410." evidence="5">
    <original>S</original>
    <variation>A</variation>
    <location>
        <position position="360"/>
    </location>
</feature>
<feature type="mutagenesis site" description="Impairs HOT1 phosphorylation; when associated with A-30; A-70; A-153 and A-360." evidence="5">
    <original>S</original>
    <variation>A</variation>
    <location>
        <position position="410"/>
    </location>
</feature>
<organism>
    <name type="scientific">Saccharomyces cerevisiae (strain ATCC 204508 / S288c)</name>
    <name type="common">Baker's yeast</name>
    <dbReference type="NCBI Taxonomy" id="559292"/>
    <lineage>
        <taxon>Eukaryota</taxon>
        <taxon>Fungi</taxon>
        <taxon>Dikarya</taxon>
        <taxon>Ascomycota</taxon>
        <taxon>Saccharomycotina</taxon>
        <taxon>Saccharomycetes</taxon>
        <taxon>Saccharomycetales</taxon>
        <taxon>Saccharomycetaceae</taxon>
        <taxon>Saccharomyces</taxon>
    </lineage>
</organism>
<reference key="1">
    <citation type="journal article" date="1997" name="Nature">
        <title>The nucleotide sequence of Saccharomyces cerevisiae chromosome XIII.</title>
        <authorList>
            <person name="Bowman S."/>
            <person name="Churcher C.M."/>
            <person name="Badcock K."/>
            <person name="Brown D."/>
            <person name="Chillingworth T."/>
            <person name="Connor R."/>
            <person name="Dedman K."/>
            <person name="Devlin K."/>
            <person name="Gentles S."/>
            <person name="Hamlin N."/>
            <person name="Hunt S."/>
            <person name="Jagels K."/>
            <person name="Lye G."/>
            <person name="Moule S."/>
            <person name="Odell C."/>
            <person name="Pearson D."/>
            <person name="Rajandream M.A."/>
            <person name="Rice P."/>
            <person name="Skelton J."/>
            <person name="Walsh S.V."/>
            <person name="Whitehead S."/>
            <person name="Barrell B.G."/>
        </authorList>
    </citation>
    <scope>NUCLEOTIDE SEQUENCE [LARGE SCALE GENOMIC DNA]</scope>
    <source>
        <strain>ATCC 204508 / S288c</strain>
    </source>
</reference>
<reference key="2">
    <citation type="journal article" date="2014" name="G3 (Bethesda)">
        <title>The reference genome sequence of Saccharomyces cerevisiae: Then and now.</title>
        <authorList>
            <person name="Engel S.R."/>
            <person name="Dietrich F.S."/>
            <person name="Fisk D.G."/>
            <person name="Binkley G."/>
            <person name="Balakrishnan R."/>
            <person name="Costanzo M.C."/>
            <person name="Dwight S.S."/>
            <person name="Hitz B.C."/>
            <person name="Karra K."/>
            <person name="Nash R.S."/>
            <person name="Weng S."/>
            <person name="Wong E.D."/>
            <person name="Lloyd P."/>
            <person name="Skrzypek M.S."/>
            <person name="Miyasato S.R."/>
            <person name="Simison M."/>
            <person name="Cherry J.M."/>
        </authorList>
    </citation>
    <scope>GENOME REANNOTATION</scope>
    <source>
        <strain>ATCC 204508 / S288c</strain>
    </source>
</reference>
<reference key="3">
    <citation type="journal article" date="1999" name="Mol. Cell. Biol.">
        <title>Osmotic stress-induced gene expression in Saccharomyces cerevisiae requires Msn1p and the novel nuclear factor Hot1p.</title>
        <authorList>
            <person name="Rep M."/>
            <person name="Reiser V."/>
            <person name="Gartner U."/>
            <person name="Thevelein J.M."/>
            <person name="Hohmann S."/>
            <person name="Ammerer G."/>
            <person name="Ruis H."/>
        </authorList>
    </citation>
    <scope>FUNCTION</scope>
    <scope>SUBCELLULAR LOCATION</scope>
    <scope>INTERACTION WITH HOG1</scope>
</reference>
<reference key="4">
    <citation type="journal article" date="2000" name="J. Biol. Chem.">
        <title>The transcriptional response of Saccharomyces cerevisiae to osmotic shock. Hot1p and Msn2p/Msn4p are required for the induction of subsets of high osmolarity glycerol pathway-dependent genes.</title>
        <authorList>
            <person name="Rep M."/>
            <person name="Krantz M."/>
            <person name="Thevelein J.M."/>
            <person name="Hohmann S."/>
        </authorList>
    </citation>
    <scope>FUNCTION</scope>
</reference>
<reference key="5">
    <citation type="journal article" date="2001" name="Mol. Cell">
        <title>Stress-induced map kinase Hog1 is part of transcription activation complexes.</title>
        <authorList>
            <person name="Alepuz P.M."/>
            <person name="Jovanovic A."/>
            <person name="Reiser V."/>
            <person name="Ammerer G."/>
        </authorList>
    </citation>
    <scope>FUNCTION</scope>
    <scope>PHOSPHORYLATION</scope>
    <scope>PROMOTER BINDING</scope>
</reference>
<reference key="6">
    <citation type="journal article" date="2003" name="EMBO J.">
        <title>Osmostress-induced transcription by Hot1 depends on a Hog1-mediated recruitment of the RNA Pol II.</title>
        <authorList>
            <person name="Alepuz P.M."/>
            <person name="de Nadal E."/>
            <person name="Zapater M."/>
            <person name="Ammerer G."/>
            <person name="Posas F."/>
        </authorList>
    </citation>
    <scope>FUNCTION</scope>
    <scope>INTERACTION WITH HOG1</scope>
    <scope>PHOSPHORYLATION</scope>
    <scope>MUTAGENESIS OF SER-30; SER-70; SER-153; SER-360 AND SER-410</scope>
</reference>
<reference key="7">
    <citation type="journal article" date="2003" name="Nature">
        <title>Global analysis of protein localization in budding yeast.</title>
        <authorList>
            <person name="Huh W.-K."/>
            <person name="Falvo J.V."/>
            <person name="Gerke L.C."/>
            <person name="Carroll A.S."/>
            <person name="Howson R.W."/>
            <person name="Weissman J.S."/>
            <person name="O'Shea E.K."/>
        </authorList>
    </citation>
    <scope>SUBCELLULAR LOCATION [LARGE SCALE ANALYSIS]</scope>
</reference>
<reference key="8">
    <citation type="journal article" date="2003" name="Nature">
        <title>Global analysis of protein expression in yeast.</title>
        <authorList>
            <person name="Ghaemmaghami S."/>
            <person name="Huh W.-K."/>
            <person name="Bower K."/>
            <person name="Howson R.W."/>
            <person name="Belle A."/>
            <person name="Dephoure N."/>
            <person name="O'Shea E.K."/>
            <person name="Weissman J.S."/>
        </authorList>
    </citation>
    <scope>LEVEL OF PROTEIN EXPRESSION [LARGE SCALE ANALYSIS]</scope>
</reference>
<reference key="9">
    <citation type="journal article" date="2008" name="Mol. Cell. Proteomics">
        <title>A multidimensional chromatography technology for in-depth phosphoproteome analysis.</title>
        <authorList>
            <person name="Albuquerque C.P."/>
            <person name="Smolka M.B."/>
            <person name="Payne S.H."/>
            <person name="Bafna V."/>
            <person name="Eng J."/>
            <person name="Zhou H."/>
        </authorList>
    </citation>
    <scope>PHOSPHORYLATION [LARGE SCALE ANALYSIS] AT SER-146</scope>
    <scope>IDENTIFICATION BY MASS SPECTROMETRY [LARGE SCALE ANALYSIS]</scope>
</reference>
<reference key="10">
    <citation type="journal article" date="2009" name="Science">
        <title>Global analysis of Cdk1 substrate phosphorylation sites provides insights into evolution.</title>
        <authorList>
            <person name="Holt L.J."/>
            <person name="Tuch B.B."/>
            <person name="Villen J."/>
            <person name="Johnson A.D."/>
            <person name="Gygi S.P."/>
            <person name="Morgan D.O."/>
        </authorList>
    </citation>
    <scope>PHOSPHORYLATION [LARGE SCALE ANALYSIS] AT SER-153</scope>
    <scope>IDENTIFICATION BY MASS SPECTROMETRY [LARGE SCALE ANALYSIS]</scope>
</reference>
<comment type="function">
    <text evidence="2 3 4 5">Required for a complete transcriptional response to osmotic stress, through recruitment of HOG1 followed by pol II recruitment to the promoters of GPD1 and other HOG-dependent genes.</text>
</comment>
<comment type="subunit">
    <text evidence="2 5">Interacts with HOG1.</text>
</comment>
<comment type="interaction">
    <interactant intactId="EBI-27376">
        <id>Q03213</id>
    </interactant>
    <interactant intactId="EBI-8437">
        <id>P32485</id>
        <label>HOG1</label>
    </interactant>
    <organismsDiffer>false</organismsDiffer>
    <experiments>4</experiments>
</comment>
<comment type="interaction">
    <interactant intactId="EBI-27376">
        <id>Q03213</id>
    </interactant>
    <interactant intactId="EBI-15864">
        <id>P32561</id>
        <label>RPD3</label>
    </interactant>
    <organismsDiffer>false</organismsDiffer>
    <experiments>3</experiments>
</comment>
<comment type="subcellular location">
    <subcellularLocation>
        <location evidence="2 6">Nucleus</location>
    </subcellularLocation>
</comment>
<comment type="PTM">
    <text>Hyperphosphorylated during acute stress.</text>
</comment>
<comment type="miscellaneous">
    <text evidence="7">Present with 149 molecules/cell in log phase SD medium.</text>
</comment>
<comment type="similarity">
    <text evidence="8">Belongs to the HOT1 family.</text>
</comment>
<name>HOT1_YEAST</name>